<comment type="catalytic activity">
    <reaction evidence="1">
        <text>CMP + ATP = CDP + ADP</text>
        <dbReference type="Rhea" id="RHEA:11600"/>
        <dbReference type="ChEBI" id="CHEBI:30616"/>
        <dbReference type="ChEBI" id="CHEBI:58069"/>
        <dbReference type="ChEBI" id="CHEBI:60377"/>
        <dbReference type="ChEBI" id="CHEBI:456216"/>
        <dbReference type="EC" id="2.7.4.25"/>
    </reaction>
</comment>
<comment type="catalytic activity">
    <reaction evidence="1">
        <text>dCMP + ATP = dCDP + ADP</text>
        <dbReference type="Rhea" id="RHEA:25094"/>
        <dbReference type="ChEBI" id="CHEBI:30616"/>
        <dbReference type="ChEBI" id="CHEBI:57566"/>
        <dbReference type="ChEBI" id="CHEBI:58593"/>
        <dbReference type="ChEBI" id="CHEBI:456216"/>
        <dbReference type="EC" id="2.7.4.25"/>
    </reaction>
</comment>
<comment type="subcellular location">
    <subcellularLocation>
        <location evidence="1">Cytoplasm</location>
    </subcellularLocation>
</comment>
<comment type="similarity">
    <text evidence="1">Belongs to the cytidylate kinase family. Type 1 subfamily.</text>
</comment>
<protein>
    <recommendedName>
        <fullName evidence="1">Cytidylate kinase</fullName>
        <shortName evidence="1">CK</shortName>
        <ecNumber evidence="1">2.7.4.25</ecNumber>
    </recommendedName>
    <alternativeName>
        <fullName evidence="1">Cytidine monophosphate kinase</fullName>
        <shortName evidence="1">CMP kinase</shortName>
    </alternativeName>
</protein>
<evidence type="ECO:0000255" key="1">
    <source>
        <dbReference type="HAMAP-Rule" id="MF_00238"/>
    </source>
</evidence>
<organism>
    <name type="scientific">Acinetobacter baumannii (strain AYE)</name>
    <dbReference type="NCBI Taxonomy" id="509173"/>
    <lineage>
        <taxon>Bacteria</taxon>
        <taxon>Pseudomonadati</taxon>
        <taxon>Pseudomonadota</taxon>
        <taxon>Gammaproteobacteria</taxon>
        <taxon>Moraxellales</taxon>
        <taxon>Moraxellaceae</taxon>
        <taxon>Acinetobacter</taxon>
        <taxon>Acinetobacter calcoaceticus/baumannii complex</taxon>
    </lineage>
</organism>
<accession>B0VD21</accession>
<proteinExistence type="inferred from homology"/>
<reference key="1">
    <citation type="journal article" date="2008" name="PLoS ONE">
        <title>Comparative analysis of Acinetobacters: three genomes for three lifestyles.</title>
        <authorList>
            <person name="Vallenet D."/>
            <person name="Nordmann P."/>
            <person name="Barbe V."/>
            <person name="Poirel L."/>
            <person name="Mangenot S."/>
            <person name="Bataille E."/>
            <person name="Dossat C."/>
            <person name="Gas S."/>
            <person name="Kreimeyer A."/>
            <person name="Lenoble P."/>
            <person name="Oztas S."/>
            <person name="Poulain J."/>
            <person name="Segurens B."/>
            <person name="Robert C."/>
            <person name="Abergel C."/>
            <person name="Claverie J.-M."/>
            <person name="Raoult D."/>
            <person name="Medigue C."/>
            <person name="Weissenbach J."/>
            <person name="Cruveiller S."/>
        </authorList>
    </citation>
    <scope>NUCLEOTIDE SEQUENCE [LARGE SCALE GENOMIC DNA]</scope>
    <source>
        <strain>AYE</strain>
    </source>
</reference>
<name>KCY_ACIBY</name>
<keyword id="KW-0067">ATP-binding</keyword>
<keyword id="KW-0963">Cytoplasm</keyword>
<keyword id="KW-0418">Kinase</keyword>
<keyword id="KW-0547">Nucleotide-binding</keyword>
<keyword id="KW-0808">Transferase</keyword>
<feature type="chain" id="PRO_1000100642" description="Cytidylate kinase">
    <location>
        <begin position="1"/>
        <end position="228"/>
    </location>
</feature>
<feature type="binding site" evidence="1">
    <location>
        <begin position="10"/>
        <end position="18"/>
    </location>
    <ligand>
        <name>ATP</name>
        <dbReference type="ChEBI" id="CHEBI:30616"/>
    </ligand>
</feature>
<dbReference type="EC" id="2.7.4.25" evidence="1"/>
<dbReference type="EMBL" id="CU459141">
    <property type="protein sequence ID" value="CAM86937.1"/>
    <property type="molecule type" value="Genomic_DNA"/>
</dbReference>
<dbReference type="RefSeq" id="WP_000218021.1">
    <property type="nucleotide sequence ID" value="NZ_JBDGFB010000001.1"/>
</dbReference>
<dbReference type="SMR" id="B0VD21"/>
<dbReference type="EnsemblBacteria" id="CAM86937">
    <property type="protein sequence ID" value="CAM86937"/>
    <property type="gene ID" value="ABAYE2062"/>
</dbReference>
<dbReference type="KEGG" id="aby:ABAYE2062"/>
<dbReference type="HOGENOM" id="CLU_079959_2_0_6"/>
<dbReference type="GO" id="GO:0005829">
    <property type="term" value="C:cytosol"/>
    <property type="evidence" value="ECO:0007669"/>
    <property type="project" value="TreeGrafter"/>
</dbReference>
<dbReference type="GO" id="GO:0005524">
    <property type="term" value="F:ATP binding"/>
    <property type="evidence" value="ECO:0007669"/>
    <property type="project" value="UniProtKB-UniRule"/>
</dbReference>
<dbReference type="GO" id="GO:0036430">
    <property type="term" value="F:CMP kinase activity"/>
    <property type="evidence" value="ECO:0007669"/>
    <property type="project" value="RHEA"/>
</dbReference>
<dbReference type="GO" id="GO:0036431">
    <property type="term" value="F:dCMP kinase activity"/>
    <property type="evidence" value="ECO:0007669"/>
    <property type="project" value="RHEA"/>
</dbReference>
<dbReference type="GO" id="GO:0015949">
    <property type="term" value="P:nucleobase-containing small molecule interconversion"/>
    <property type="evidence" value="ECO:0007669"/>
    <property type="project" value="TreeGrafter"/>
</dbReference>
<dbReference type="GO" id="GO:0006220">
    <property type="term" value="P:pyrimidine nucleotide metabolic process"/>
    <property type="evidence" value="ECO:0007669"/>
    <property type="project" value="UniProtKB-UniRule"/>
</dbReference>
<dbReference type="CDD" id="cd02020">
    <property type="entry name" value="CMPK"/>
    <property type="match status" value="1"/>
</dbReference>
<dbReference type="Gene3D" id="3.40.50.300">
    <property type="entry name" value="P-loop containing nucleotide triphosphate hydrolases"/>
    <property type="match status" value="1"/>
</dbReference>
<dbReference type="HAMAP" id="MF_00238">
    <property type="entry name" value="Cytidyl_kinase_type1"/>
    <property type="match status" value="1"/>
</dbReference>
<dbReference type="InterPro" id="IPR003136">
    <property type="entry name" value="Cytidylate_kin"/>
</dbReference>
<dbReference type="InterPro" id="IPR011994">
    <property type="entry name" value="Cytidylate_kinase_dom"/>
</dbReference>
<dbReference type="InterPro" id="IPR027417">
    <property type="entry name" value="P-loop_NTPase"/>
</dbReference>
<dbReference type="NCBIfam" id="TIGR00017">
    <property type="entry name" value="cmk"/>
    <property type="match status" value="1"/>
</dbReference>
<dbReference type="PANTHER" id="PTHR21299:SF2">
    <property type="entry name" value="CYTIDYLATE KINASE"/>
    <property type="match status" value="1"/>
</dbReference>
<dbReference type="PANTHER" id="PTHR21299">
    <property type="entry name" value="CYTIDYLATE KINASE/PANTOATE-BETA-ALANINE LIGASE"/>
    <property type="match status" value="1"/>
</dbReference>
<dbReference type="Pfam" id="PF02224">
    <property type="entry name" value="Cytidylate_kin"/>
    <property type="match status" value="1"/>
</dbReference>
<dbReference type="SUPFAM" id="SSF52540">
    <property type="entry name" value="P-loop containing nucleoside triphosphate hydrolases"/>
    <property type="match status" value="1"/>
</dbReference>
<gene>
    <name evidence="1" type="primary">cmk</name>
    <name type="ordered locus">ABAYE2062</name>
</gene>
<sequence length="228" mass="25238">MTVQIITIDGPSGSGKGTLAAKLAAYYQFHLLDSGALYRLLGLSLHKHDLLEKLDSHLDMCVNYARQLNIKFETSAEGTLVFLDGEDVTQTIRTERVGEYASKVAAIPELRQALFERQRAFAQTPGLVADGRDMATSIFPEANAKIYLTASAESRAERRVKQLQGMGLDAKINDILANIQARDKRDMEREVAPLKPAADAYIIDSSELTIDQVFKLMVDYVNSRTVSN</sequence>